<organism>
    <name type="scientific">Streptococcus pyogenes serotype M1</name>
    <dbReference type="NCBI Taxonomy" id="301447"/>
    <lineage>
        <taxon>Bacteria</taxon>
        <taxon>Bacillati</taxon>
        <taxon>Bacillota</taxon>
        <taxon>Bacilli</taxon>
        <taxon>Lactobacillales</taxon>
        <taxon>Streptococcaceae</taxon>
        <taxon>Streptococcus</taxon>
    </lineage>
</organism>
<gene>
    <name type="ordered locus">SPy_1248</name>
    <name type="ordered locus">M5005_Spy0958</name>
</gene>
<feature type="chain" id="PRO_0000216698" description="UPF0223 protein SPy_1248/M5005_Spy0958">
    <location>
        <begin position="1"/>
        <end position="92"/>
    </location>
</feature>
<name>Y1248_STRP1</name>
<sequence>MSGNYYYPLDLSWSTEEISSVLHFLNKVELAYEKKVDAKQLLDSYKTYKTIVKSKAQEKQIDRDFQKVSGYSTYQVVKKAKAIEKGFFSLGN</sequence>
<dbReference type="EMBL" id="AE004092">
    <property type="protein sequence ID" value="AAK34103.1"/>
    <property type="molecule type" value="Genomic_DNA"/>
</dbReference>
<dbReference type="EMBL" id="CP000017">
    <property type="protein sequence ID" value="AAZ51576.1"/>
    <property type="molecule type" value="Genomic_DNA"/>
</dbReference>
<dbReference type="RefSeq" id="NP_269382.1">
    <property type="nucleotide sequence ID" value="NC_002737.2"/>
</dbReference>
<dbReference type="SMR" id="P67363"/>
<dbReference type="PaxDb" id="1314-HKU360_01003"/>
<dbReference type="KEGG" id="spy:SPy_1248"/>
<dbReference type="KEGG" id="spz:M5005_Spy0958"/>
<dbReference type="PATRIC" id="fig|160490.10.peg.1091"/>
<dbReference type="HOGENOM" id="CLU_166693_0_0_9"/>
<dbReference type="OMA" id="SYDWSTQ"/>
<dbReference type="Proteomes" id="UP000000750">
    <property type="component" value="Chromosome"/>
</dbReference>
<dbReference type="Gene3D" id="1.10.220.80">
    <property type="entry name" value="BH2638-like"/>
    <property type="match status" value="1"/>
</dbReference>
<dbReference type="HAMAP" id="MF_01041">
    <property type="entry name" value="UPF0223"/>
    <property type="match status" value="1"/>
</dbReference>
<dbReference type="InterPro" id="IPR023324">
    <property type="entry name" value="BH2638-like_sf"/>
</dbReference>
<dbReference type="InterPro" id="IPR007920">
    <property type="entry name" value="UPF0223"/>
</dbReference>
<dbReference type="NCBIfam" id="NF003353">
    <property type="entry name" value="PRK04387.1"/>
    <property type="match status" value="1"/>
</dbReference>
<dbReference type="Pfam" id="PF05256">
    <property type="entry name" value="UPF0223"/>
    <property type="match status" value="1"/>
</dbReference>
<dbReference type="PIRSF" id="PIRSF037260">
    <property type="entry name" value="UPF0223"/>
    <property type="match status" value="1"/>
</dbReference>
<dbReference type="SUPFAM" id="SSF158504">
    <property type="entry name" value="BH2638-like"/>
    <property type="match status" value="1"/>
</dbReference>
<evidence type="ECO:0000255" key="1">
    <source>
        <dbReference type="HAMAP-Rule" id="MF_01041"/>
    </source>
</evidence>
<protein>
    <recommendedName>
        <fullName evidence="1">UPF0223 protein SPy_1248/M5005_Spy0958</fullName>
    </recommendedName>
</protein>
<comment type="similarity">
    <text evidence="1">Belongs to the UPF0223 family.</text>
</comment>
<keyword id="KW-1185">Reference proteome</keyword>
<reference key="1">
    <citation type="journal article" date="2001" name="Proc. Natl. Acad. Sci. U.S.A.">
        <title>Complete genome sequence of an M1 strain of Streptococcus pyogenes.</title>
        <authorList>
            <person name="Ferretti J.J."/>
            <person name="McShan W.M."/>
            <person name="Ajdic D.J."/>
            <person name="Savic D.J."/>
            <person name="Savic G."/>
            <person name="Lyon K."/>
            <person name="Primeaux C."/>
            <person name="Sezate S."/>
            <person name="Suvorov A.N."/>
            <person name="Kenton S."/>
            <person name="Lai H.S."/>
            <person name="Lin S.P."/>
            <person name="Qian Y."/>
            <person name="Jia H.G."/>
            <person name="Najar F.Z."/>
            <person name="Ren Q."/>
            <person name="Zhu H."/>
            <person name="Song L."/>
            <person name="White J."/>
            <person name="Yuan X."/>
            <person name="Clifton S.W."/>
            <person name="Roe B.A."/>
            <person name="McLaughlin R.E."/>
        </authorList>
    </citation>
    <scope>NUCLEOTIDE SEQUENCE [LARGE SCALE GENOMIC DNA]</scope>
    <source>
        <strain>ATCC 700294 / SF370 / Serotype M1</strain>
    </source>
</reference>
<reference key="2">
    <citation type="journal article" date="2005" name="J. Infect. Dis.">
        <title>Evolutionary origin and emergence of a highly successful clone of serotype M1 group A Streptococcus involved multiple horizontal gene transfer events.</title>
        <authorList>
            <person name="Sumby P."/>
            <person name="Porcella S.F."/>
            <person name="Madrigal A.G."/>
            <person name="Barbian K.D."/>
            <person name="Virtaneva K."/>
            <person name="Ricklefs S.M."/>
            <person name="Sturdevant D.E."/>
            <person name="Graham M.R."/>
            <person name="Vuopio-Varkila J."/>
            <person name="Hoe N.P."/>
            <person name="Musser J.M."/>
        </authorList>
    </citation>
    <scope>NUCLEOTIDE SEQUENCE [LARGE SCALE GENOMIC DNA]</scope>
    <source>
        <strain>ATCC BAA-947 / MGAS5005 / Serotype M1</strain>
    </source>
</reference>
<proteinExistence type="inferred from homology"/>
<accession>P67363</accession>
<accession>Q48YJ6</accession>
<accession>Q99ZF8</accession>